<dbReference type="EC" id="2.7.7.6" evidence="1"/>
<dbReference type="EMBL" id="X57144">
    <property type="protein sequence ID" value="CAA40426.1"/>
    <property type="molecule type" value="Genomic_DNA"/>
</dbReference>
<dbReference type="EMBL" id="AM774415">
    <property type="protein sequence ID" value="CAP15003.1"/>
    <property type="molecule type" value="Genomic_DNA"/>
</dbReference>
<dbReference type="PIR" id="A33926">
    <property type="entry name" value="A33926"/>
</dbReference>
<dbReference type="RefSeq" id="WP_010903996.1">
    <property type="nucleotide sequence ID" value="NC_010364.1"/>
</dbReference>
<dbReference type="SMR" id="B0R8D4"/>
<dbReference type="EnsemblBacteria" id="CAP15003">
    <property type="protein sequence ID" value="CAP15003"/>
    <property type="gene ID" value="OE_4740R"/>
</dbReference>
<dbReference type="KEGG" id="hsl:OE_4740R"/>
<dbReference type="HOGENOM" id="CLU_000487_3_1_2"/>
<dbReference type="PhylomeDB" id="B0R8D4"/>
<dbReference type="Proteomes" id="UP000001321">
    <property type="component" value="Chromosome"/>
</dbReference>
<dbReference type="GO" id="GO:0005737">
    <property type="term" value="C:cytoplasm"/>
    <property type="evidence" value="ECO:0007669"/>
    <property type="project" value="UniProtKB-SubCell"/>
</dbReference>
<dbReference type="GO" id="GO:0000428">
    <property type="term" value="C:DNA-directed RNA polymerase complex"/>
    <property type="evidence" value="ECO:0007669"/>
    <property type="project" value="UniProtKB-KW"/>
</dbReference>
<dbReference type="GO" id="GO:0003677">
    <property type="term" value="F:DNA binding"/>
    <property type="evidence" value="ECO:0007669"/>
    <property type="project" value="UniProtKB-UniRule"/>
</dbReference>
<dbReference type="GO" id="GO:0003899">
    <property type="term" value="F:DNA-directed RNA polymerase activity"/>
    <property type="evidence" value="ECO:0007669"/>
    <property type="project" value="UniProtKB-UniRule"/>
</dbReference>
<dbReference type="GO" id="GO:0000287">
    <property type="term" value="F:magnesium ion binding"/>
    <property type="evidence" value="ECO:0007669"/>
    <property type="project" value="UniProtKB-UniRule"/>
</dbReference>
<dbReference type="GO" id="GO:0008270">
    <property type="term" value="F:zinc ion binding"/>
    <property type="evidence" value="ECO:0007669"/>
    <property type="project" value="UniProtKB-UniRule"/>
</dbReference>
<dbReference type="GO" id="GO:0006351">
    <property type="term" value="P:DNA-templated transcription"/>
    <property type="evidence" value="ECO:0007669"/>
    <property type="project" value="UniProtKB-UniRule"/>
</dbReference>
<dbReference type="CDD" id="cd02582">
    <property type="entry name" value="RNAP_archeal_A"/>
    <property type="match status" value="1"/>
</dbReference>
<dbReference type="FunFam" id="2.40.40.20:FF:000019">
    <property type="entry name" value="DNA-directed RNA polymerase II subunit RPB1"/>
    <property type="match status" value="1"/>
</dbReference>
<dbReference type="Gene3D" id="1.10.132.30">
    <property type="match status" value="1"/>
</dbReference>
<dbReference type="Gene3D" id="2.40.40.20">
    <property type="match status" value="1"/>
</dbReference>
<dbReference type="Gene3D" id="6.10.250.2940">
    <property type="match status" value="1"/>
</dbReference>
<dbReference type="Gene3D" id="6.20.50.80">
    <property type="match status" value="1"/>
</dbReference>
<dbReference type="Gene3D" id="3.30.1490.180">
    <property type="entry name" value="RNA polymerase ii"/>
    <property type="match status" value="1"/>
</dbReference>
<dbReference type="Gene3D" id="4.10.860.120">
    <property type="entry name" value="RNA polymerase II, clamp domain"/>
    <property type="match status" value="2"/>
</dbReference>
<dbReference type="Gene3D" id="1.10.274.100">
    <property type="entry name" value="RNA polymerase Rpb1, domain 3"/>
    <property type="match status" value="1"/>
</dbReference>
<dbReference type="HAMAP" id="MF_00863">
    <property type="entry name" value="RNApol_arch_Rpo1N"/>
    <property type="match status" value="1"/>
</dbReference>
<dbReference type="InterPro" id="IPR045867">
    <property type="entry name" value="DNA-dir_RpoC_beta_prime"/>
</dbReference>
<dbReference type="InterPro" id="IPR000722">
    <property type="entry name" value="RNA_pol_asu"/>
</dbReference>
<dbReference type="InterPro" id="IPR006592">
    <property type="entry name" value="RNA_pol_N"/>
</dbReference>
<dbReference type="InterPro" id="IPR007080">
    <property type="entry name" value="RNA_pol_Rpb1_1"/>
</dbReference>
<dbReference type="InterPro" id="IPR007066">
    <property type="entry name" value="RNA_pol_Rpb1_3"/>
</dbReference>
<dbReference type="InterPro" id="IPR042102">
    <property type="entry name" value="RNA_pol_Rpb1_3_sf"/>
</dbReference>
<dbReference type="InterPro" id="IPR007083">
    <property type="entry name" value="RNA_pol_Rpb1_4"/>
</dbReference>
<dbReference type="InterPro" id="IPR007081">
    <property type="entry name" value="RNA_pol_Rpb1_5"/>
</dbReference>
<dbReference type="InterPro" id="IPR044893">
    <property type="entry name" value="RNA_pol_Rpb1_clamp_domain"/>
</dbReference>
<dbReference type="InterPro" id="IPR038120">
    <property type="entry name" value="Rpb1_funnel_sf"/>
</dbReference>
<dbReference type="InterPro" id="IPR012758">
    <property type="entry name" value="RPO1N"/>
</dbReference>
<dbReference type="NCBIfam" id="NF006336">
    <property type="entry name" value="PRK08566.1"/>
    <property type="match status" value="1"/>
</dbReference>
<dbReference type="NCBIfam" id="TIGR02390">
    <property type="entry name" value="RNA_pol_rpoA1"/>
    <property type="match status" value="1"/>
</dbReference>
<dbReference type="PANTHER" id="PTHR19376">
    <property type="entry name" value="DNA-DIRECTED RNA POLYMERASE"/>
    <property type="match status" value="1"/>
</dbReference>
<dbReference type="PANTHER" id="PTHR19376:SF32">
    <property type="entry name" value="DNA-DIRECTED RNA POLYMERASE III SUBUNIT RPC1"/>
    <property type="match status" value="1"/>
</dbReference>
<dbReference type="Pfam" id="PF04997">
    <property type="entry name" value="RNA_pol_Rpb1_1"/>
    <property type="match status" value="1"/>
</dbReference>
<dbReference type="Pfam" id="PF00623">
    <property type="entry name" value="RNA_pol_Rpb1_2"/>
    <property type="match status" value="1"/>
</dbReference>
<dbReference type="Pfam" id="PF04983">
    <property type="entry name" value="RNA_pol_Rpb1_3"/>
    <property type="match status" value="1"/>
</dbReference>
<dbReference type="Pfam" id="PF05000">
    <property type="entry name" value="RNA_pol_Rpb1_4"/>
    <property type="match status" value="1"/>
</dbReference>
<dbReference type="Pfam" id="PF04998">
    <property type="entry name" value="RNA_pol_Rpb1_5"/>
    <property type="match status" value="1"/>
</dbReference>
<dbReference type="SMART" id="SM00663">
    <property type="entry name" value="RPOLA_N"/>
    <property type="match status" value="1"/>
</dbReference>
<dbReference type="SUPFAM" id="SSF64484">
    <property type="entry name" value="beta and beta-prime subunits of DNA dependent RNA-polymerase"/>
    <property type="match status" value="1"/>
</dbReference>
<keyword id="KW-0963">Cytoplasm</keyword>
<keyword id="KW-0238">DNA-binding</keyword>
<keyword id="KW-0240">DNA-directed RNA polymerase</keyword>
<keyword id="KW-0460">Magnesium</keyword>
<keyword id="KW-0479">Metal-binding</keyword>
<keyword id="KW-0548">Nucleotidyltransferase</keyword>
<keyword id="KW-0804">Transcription</keyword>
<keyword id="KW-0808">Transferase</keyword>
<keyword id="KW-0862">Zinc</keyword>
<proteinExistence type="evidence at protein level"/>
<sequence length="971" mass="108734">MSAGQAPKEIGEISFGLMDPEEYRDMSATKVITADTYDDDGFPIDMGLMDPRLGVIDPGLECKTCGQRSGGCNGHFGHIELAAPVIHVGFSKLIRRLLRGTCRECASLLLTEEEKDEYRENLDRTRSLRQDVSDVMTAAIREARKKDHCPHCGEVQYDVKHEKPTTYYEVQQVLASDYSERIAASMQPDEDEDDAGVSPQELAEQTDIDISRINEILSGEFRPRREDREAIETAIGADLTTEDMNKLMPSDIRDWFEDIPGEDLEALGVNSDRSRPEWMILTVLPVPPVTARPSITLDNGQRSEDDLTHKLVDIIRINQRFMENREAGAPQLIIEDLWELLQYHVTTFMDNEISGTPPARHRSGRPLKTLSQRLKGKEGRFRGSLSGKRVNFSARTVISPDPTLSLNEVGVPDRVATEMTQTMVVNEQNLERARRYVRNGPEGHPGANYVTRPDGRRVRVTEKVCEELAERVEPGWEVQRHLIDGDIIIFNRQPSLHRMSIMAHEVVVMPYKTFRLNTVVCPPYNADFDGDEMNMHALQNEEARAEARVLMRVQEQILSPRFGENIIGAIQDHISGTYLLTNDNPRFNETQASDLLRQTRIDELPAAAGTDEDGDQYWTGHQIFSELLPDDLSLEFTGTTGDTVVIEDGQLLEGTIADDEVGEYGSEIVDTITKVHGNTRARIFINEVASLAMRSIMHFGFSIGIDDETVSTEARERIDEAIQSAYDRVQELIETYENGDLESLPGRTVDETLEMKIMQTLGKARDSAGDVAEENFDEDNPAVVMANSGARGSMLNLTQMAGCVGQQAVRGERINRGYEDRTLSHFAPNDLSSEAHGFVENSYTSGLTPKEFFFHAMGGREGLVDTAVRTSKSGYLQRRLINALSELETQYDGTVRDTSDTIVQFEFGEDGTSPVQVSSNEEVDIDVEHVADRILNSEFDSDTQKAEFLEVEEPPTNLSEHGAAWEVESDD</sequence>
<name>RPO1N_HALS3</name>
<protein>
    <recommendedName>
        <fullName evidence="1">DNA-directed RNA polymerase subunit Rpo1N</fullName>
        <ecNumber evidence="1">2.7.7.6</ecNumber>
    </recommendedName>
    <alternativeName>
        <fullName evidence="1">DNA-directed RNA polymerase subunit A'</fullName>
    </alternativeName>
</protein>
<organism>
    <name type="scientific">Halobacterium salinarum (strain ATCC 29341 / DSM 671 / R1)</name>
    <dbReference type="NCBI Taxonomy" id="478009"/>
    <lineage>
        <taxon>Archaea</taxon>
        <taxon>Methanobacteriati</taxon>
        <taxon>Methanobacteriota</taxon>
        <taxon>Stenosarchaea group</taxon>
        <taxon>Halobacteria</taxon>
        <taxon>Halobacteriales</taxon>
        <taxon>Halobacteriaceae</taxon>
        <taxon>Halobacterium</taxon>
        <taxon>Halobacterium salinarum NRC-34001</taxon>
    </lineage>
</organism>
<gene>
    <name evidence="1" type="primary">rpo1N</name>
    <name evidence="1" type="synonym">rpoA1</name>
    <name type="ordered locus">OE_4740R</name>
</gene>
<reference key="1">
    <citation type="journal article" date="1989" name="J. Mol. Biol.">
        <title>Sequence, organization, transcription and evolution of RNA polymerase subunit genes from the archaebacterial extreme halophiles Halobacterium halobium and Halococcus morrhuae.</title>
        <authorList>
            <person name="Leffers H."/>
            <person name="Gropp F."/>
            <person name="Lottspeich F."/>
            <person name="Zillig W."/>
            <person name="Garrett R.A."/>
        </authorList>
    </citation>
    <scope>NUCLEOTIDE SEQUENCE [GENOMIC DNA]</scope>
    <scope>BLOCKAGE OF N-TERMINUS</scope>
    <scope>SUBUNIT</scope>
    <source>
        <strain>ATCC 29341 / DSM 671 / R1</strain>
    </source>
</reference>
<reference key="2">
    <citation type="journal article" date="2008" name="Genomics">
        <title>Evolution in the laboratory: the genome of Halobacterium salinarum strain R1 compared to that of strain NRC-1.</title>
        <authorList>
            <person name="Pfeiffer F."/>
            <person name="Schuster S.C."/>
            <person name="Broicher A."/>
            <person name="Falb M."/>
            <person name="Palm P."/>
            <person name="Rodewald K."/>
            <person name="Ruepp A."/>
            <person name="Soppa J."/>
            <person name="Tittor J."/>
            <person name="Oesterhelt D."/>
        </authorList>
    </citation>
    <scope>NUCLEOTIDE SEQUENCE [LARGE SCALE GENOMIC DNA]</scope>
    <source>
        <strain>ATCC 29341 / DSM 671 / R1</strain>
    </source>
</reference>
<feature type="chain" id="PRO_0000409671" description="DNA-directed RNA polymerase subunit Rpo1N">
    <location>
        <begin position="1"/>
        <end position="971"/>
    </location>
</feature>
<feature type="region of interest" description="Disordered" evidence="2">
    <location>
        <begin position="185"/>
        <end position="204"/>
    </location>
</feature>
<feature type="region of interest" description="Disordered" evidence="2">
    <location>
        <begin position="951"/>
        <end position="971"/>
    </location>
</feature>
<feature type="binding site" evidence="1">
    <location>
        <position position="62"/>
    </location>
    <ligand>
        <name>Zn(2+)</name>
        <dbReference type="ChEBI" id="CHEBI:29105"/>
        <label>1</label>
    </ligand>
</feature>
<feature type="binding site" evidence="1">
    <location>
        <position position="65"/>
    </location>
    <ligand>
        <name>Zn(2+)</name>
        <dbReference type="ChEBI" id="CHEBI:29105"/>
        <label>1</label>
    </ligand>
</feature>
<feature type="binding site" evidence="1">
    <location>
        <position position="72"/>
    </location>
    <ligand>
        <name>Zn(2+)</name>
        <dbReference type="ChEBI" id="CHEBI:29105"/>
        <label>1</label>
    </ligand>
</feature>
<feature type="binding site" evidence="1">
    <location>
        <position position="75"/>
    </location>
    <ligand>
        <name>Zn(2+)</name>
        <dbReference type="ChEBI" id="CHEBI:29105"/>
        <label>1</label>
    </ligand>
</feature>
<feature type="binding site" evidence="1">
    <location>
        <position position="102"/>
    </location>
    <ligand>
        <name>Zn(2+)</name>
        <dbReference type="ChEBI" id="CHEBI:29105"/>
        <label>2</label>
    </ligand>
</feature>
<feature type="binding site" evidence="1">
    <location>
        <position position="105"/>
    </location>
    <ligand>
        <name>Zn(2+)</name>
        <dbReference type="ChEBI" id="CHEBI:29105"/>
        <label>2</label>
    </ligand>
</feature>
<feature type="binding site" evidence="1">
    <location>
        <position position="149"/>
    </location>
    <ligand>
        <name>Zn(2+)</name>
        <dbReference type="ChEBI" id="CHEBI:29105"/>
        <label>2</label>
    </ligand>
</feature>
<feature type="binding site" evidence="1">
    <location>
        <position position="152"/>
    </location>
    <ligand>
        <name>Zn(2+)</name>
        <dbReference type="ChEBI" id="CHEBI:29105"/>
        <label>2</label>
    </ligand>
</feature>
<feature type="binding site" evidence="1">
    <location>
        <position position="527"/>
    </location>
    <ligand>
        <name>Mg(2+)</name>
        <dbReference type="ChEBI" id="CHEBI:18420"/>
    </ligand>
</feature>
<feature type="binding site" evidence="1">
    <location>
        <position position="529"/>
    </location>
    <ligand>
        <name>Mg(2+)</name>
        <dbReference type="ChEBI" id="CHEBI:18420"/>
    </ligand>
</feature>
<feature type="binding site" evidence="1">
    <location>
        <position position="531"/>
    </location>
    <ligand>
        <name>Mg(2+)</name>
        <dbReference type="ChEBI" id="CHEBI:18420"/>
    </ligand>
</feature>
<feature type="modified residue" description="Blocked amino end (Met)" evidence="3">
    <location>
        <position position="1"/>
    </location>
</feature>
<feature type="sequence conflict" description="In Ref. 1; CAA40426." evidence="4" ref="1">
    <original>Y</original>
    <variation>I</variation>
    <location>
        <position position="726"/>
    </location>
</feature>
<evidence type="ECO:0000255" key="1">
    <source>
        <dbReference type="HAMAP-Rule" id="MF_00863"/>
    </source>
</evidence>
<evidence type="ECO:0000256" key="2">
    <source>
        <dbReference type="SAM" id="MobiDB-lite"/>
    </source>
</evidence>
<evidence type="ECO:0000269" key="3">
    <source>
    </source>
</evidence>
<evidence type="ECO:0000305" key="4"/>
<comment type="function">
    <text evidence="1">DNA-dependent RNA polymerase (RNAP) catalyzes the transcription of DNA into RNA using the four ribonucleoside triphosphates as substrates. Forms the clamp head domain.</text>
</comment>
<comment type="catalytic activity">
    <reaction evidence="1">
        <text>RNA(n) + a ribonucleoside 5'-triphosphate = RNA(n+1) + diphosphate</text>
        <dbReference type="Rhea" id="RHEA:21248"/>
        <dbReference type="Rhea" id="RHEA-COMP:14527"/>
        <dbReference type="Rhea" id="RHEA-COMP:17342"/>
        <dbReference type="ChEBI" id="CHEBI:33019"/>
        <dbReference type="ChEBI" id="CHEBI:61557"/>
        <dbReference type="ChEBI" id="CHEBI:140395"/>
        <dbReference type="EC" id="2.7.7.6"/>
    </reaction>
</comment>
<comment type="cofactor">
    <cofactor evidence="1">
        <name>Mg(2+)</name>
        <dbReference type="ChEBI" id="CHEBI:18420"/>
    </cofactor>
</comment>
<comment type="cofactor">
    <cofactor evidence="1">
        <name>Zn(2+)</name>
        <dbReference type="ChEBI" id="CHEBI:29105"/>
    </cofactor>
    <text evidence="1">Binds at least 2 Zn(2+) per subunit.</text>
</comment>
<comment type="subunit">
    <text evidence="1 3">Part of the RNA polymerase complex.</text>
</comment>
<comment type="subcellular location">
    <subcellularLocation>
        <location evidence="1">Cytoplasm</location>
    </subcellularLocation>
</comment>
<comment type="PTM">
    <text evidence="3">The N-terminus is blocked.</text>
</comment>
<comment type="similarity">
    <text evidence="1">Belongs to the RNA polymerase beta' chain family.</text>
</comment>
<accession>B0R8D4</accession>
<accession>P15350</accession>
<accession>Q9HM79</accession>